<dbReference type="EMBL" id="BC103446">
    <property type="protein sequence ID" value="AAI03447.1"/>
    <property type="molecule type" value="mRNA"/>
</dbReference>
<dbReference type="RefSeq" id="NP_001070513.1">
    <property type="nucleotide sequence ID" value="NM_001077045.2"/>
</dbReference>
<dbReference type="SMR" id="Q3ZBC2"/>
<dbReference type="FunCoup" id="Q3ZBC2">
    <property type="interactions" value="2168"/>
</dbReference>
<dbReference type="STRING" id="9913.ENSBTAP00000020305"/>
<dbReference type="PaxDb" id="9913-ENSBTAP00000020305"/>
<dbReference type="Ensembl" id="ENSBTAT00000020305.4">
    <property type="protein sequence ID" value="ENSBTAP00000020305.2"/>
    <property type="gene ID" value="ENSBTAG00000015266.5"/>
</dbReference>
<dbReference type="GeneID" id="767983"/>
<dbReference type="KEGG" id="bta:767983"/>
<dbReference type="CTD" id="54949"/>
<dbReference type="VEuPathDB" id="HostDB:ENSBTAG00000015266"/>
<dbReference type="VGNC" id="VGNC:56278">
    <property type="gene designation" value="SDHAF2"/>
</dbReference>
<dbReference type="eggNOG" id="KOG3326">
    <property type="taxonomic scope" value="Eukaryota"/>
</dbReference>
<dbReference type="GeneTree" id="ENSGT00390000001149"/>
<dbReference type="HOGENOM" id="CLU_103054_0_2_1"/>
<dbReference type="InParanoid" id="Q3ZBC2"/>
<dbReference type="OMA" id="YGKPQNP"/>
<dbReference type="OrthoDB" id="284292at2759"/>
<dbReference type="TreeFam" id="TF300175"/>
<dbReference type="Reactome" id="R-BTA-9854311">
    <property type="pathway name" value="Maturation of TCA enzymes and regulation of TCA cycle"/>
</dbReference>
<dbReference type="Proteomes" id="UP000009136">
    <property type="component" value="Chromosome 29"/>
</dbReference>
<dbReference type="Bgee" id="ENSBTAG00000015266">
    <property type="expression patterns" value="Expressed in tongue muscle and 103 other cell types or tissues"/>
</dbReference>
<dbReference type="GO" id="GO:0005759">
    <property type="term" value="C:mitochondrial matrix"/>
    <property type="evidence" value="ECO:0007669"/>
    <property type="project" value="UniProtKB-SubCell"/>
</dbReference>
<dbReference type="GO" id="GO:0005739">
    <property type="term" value="C:mitochondrion"/>
    <property type="evidence" value="ECO:0000250"/>
    <property type="project" value="UniProtKB"/>
</dbReference>
<dbReference type="GO" id="GO:0006121">
    <property type="term" value="P:mitochondrial electron transport, succinate to ubiquinone"/>
    <property type="evidence" value="ECO:0000250"/>
    <property type="project" value="UniProtKB"/>
</dbReference>
<dbReference type="GO" id="GO:0034553">
    <property type="term" value="P:mitochondrial respiratory chain complex II assembly"/>
    <property type="evidence" value="ECO:0000318"/>
    <property type="project" value="GO_Central"/>
</dbReference>
<dbReference type="GO" id="GO:0018293">
    <property type="term" value="P:protein-FAD linkage"/>
    <property type="evidence" value="ECO:0000250"/>
    <property type="project" value="UniProtKB"/>
</dbReference>
<dbReference type="GO" id="GO:0006099">
    <property type="term" value="P:tricarboxylic acid cycle"/>
    <property type="evidence" value="ECO:0000318"/>
    <property type="project" value="GO_Central"/>
</dbReference>
<dbReference type="FunFam" id="1.10.150.250:FF:000002">
    <property type="entry name" value="Succinate dehydrogenase assembly factor 2, mitochondrial"/>
    <property type="match status" value="1"/>
</dbReference>
<dbReference type="Gene3D" id="1.10.150.250">
    <property type="entry name" value="Flavinator of succinate dehydrogenase"/>
    <property type="match status" value="1"/>
</dbReference>
<dbReference type="HAMAP" id="MF_03057">
    <property type="entry name" value="SDHAF2"/>
    <property type="match status" value="1"/>
</dbReference>
<dbReference type="InterPro" id="IPR005631">
    <property type="entry name" value="SDH"/>
</dbReference>
<dbReference type="InterPro" id="IPR036714">
    <property type="entry name" value="SDH_sf"/>
</dbReference>
<dbReference type="InterPro" id="IPR028882">
    <property type="entry name" value="SDHAF2"/>
</dbReference>
<dbReference type="PANTHER" id="PTHR12469">
    <property type="entry name" value="PROTEIN EMI5 HOMOLOG, MITOCHONDRIAL"/>
    <property type="match status" value="1"/>
</dbReference>
<dbReference type="PANTHER" id="PTHR12469:SF2">
    <property type="entry name" value="SUCCINATE DEHYDROGENASE ASSEMBLY FACTOR 2, MITOCHONDRIAL"/>
    <property type="match status" value="1"/>
</dbReference>
<dbReference type="Pfam" id="PF03937">
    <property type="entry name" value="Sdh5"/>
    <property type="match status" value="1"/>
</dbReference>
<dbReference type="SUPFAM" id="SSF109910">
    <property type="entry name" value="YgfY-like"/>
    <property type="match status" value="1"/>
</dbReference>
<feature type="transit peptide" description="Mitochondrion" evidence="1">
    <location>
        <begin position="1"/>
        <end position="29"/>
    </location>
</feature>
<feature type="chain" id="PRO_0000294356" description="Succinate dehydrogenase assembly factor 2, mitochondrial">
    <location>
        <begin position="30"/>
        <end position="166"/>
    </location>
</feature>
<protein>
    <recommendedName>
        <fullName evidence="2">Succinate dehydrogenase assembly factor 2, mitochondrial</fullName>
        <shortName evidence="2">SDH assembly factor 2</shortName>
        <shortName evidence="2">SDHAF2</shortName>
    </recommendedName>
</protein>
<name>SDHF2_BOVIN</name>
<gene>
    <name evidence="2" type="primary">SDHAF2</name>
    <name evidence="2" type="synonym">PGL2</name>
    <name evidence="2" type="synonym">SDH5</name>
</gene>
<organism>
    <name type="scientific">Bos taurus</name>
    <name type="common">Bovine</name>
    <dbReference type="NCBI Taxonomy" id="9913"/>
    <lineage>
        <taxon>Eukaryota</taxon>
        <taxon>Metazoa</taxon>
        <taxon>Chordata</taxon>
        <taxon>Craniata</taxon>
        <taxon>Vertebrata</taxon>
        <taxon>Euteleostomi</taxon>
        <taxon>Mammalia</taxon>
        <taxon>Eutheria</taxon>
        <taxon>Laurasiatheria</taxon>
        <taxon>Artiodactyla</taxon>
        <taxon>Ruminantia</taxon>
        <taxon>Pecora</taxon>
        <taxon>Bovidae</taxon>
        <taxon>Bovinae</taxon>
        <taxon>Bos</taxon>
    </lineage>
</organism>
<proteinExistence type="evidence at transcript level"/>
<keyword id="KW-0143">Chaperone</keyword>
<keyword id="KW-0496">Mitochondrion</keyword>
<keyword id="KW-1185">Reference proteome</keyword>
<keyword id="KW-0809">Transit peptide</keyword>
<accession>Q3ZBC2</accession>
<reference key="1">
    <citation type="submission" date="2005-08" db="EMBL/GenBank/DDBJ databases">
        <authorList>
            <consortium name="NIH - Mammalian Gene Collection (MGC) project"/>
        </authorList>
    </citation>
    <scope>NUCLEOTIDE SEQUENCE [LARGE SCALE MRNA]</scope>
    <source>
        <strain>Hereford</strain>
        <tissue>Thymus</tissue>
    </source>
</reference>
<sequence length="166" mass="19604">MAVVAVFPALARMLAVSRRRLVSPSLSMTSCRRCYRGDSPTDSQKDMIEIPLPPWQERTDESIETKRARLLYESRKRGMLENCILLSLFAKEHLQHMTEKQLNLYDRLINEPSNDWDIYYWATEAKPAPEIFENEVMTLLRDFAKNKNKEQRLRAPDLEYLFEKPH</sequence>
<comment type="function">
    <text evidence="2">Plays an essential role in the assembly of succinate dehydrogenase (SDH), an enzyme complex (also referred to as respiratory complex II) that is a component of both the tricarboxylic acid (TCA) cycle and the mitochondrial electron transport chain, and which couples the oxidation of succinate to fumarate with the reduction of ubiquinone (coenzyme Q) to ubiquinol. Required for flavinylation (covalent attachment of FAD) of the flavoprotein subunit SDHA of the SDH catalytic dimer.</text>
</comment>
<comment type="subunit">
    <text evidence="2">Interacts with SDHA within the SDH catalytic dimer.</text>
</comment>
<comment type="subcellular location">
    <subcellularLocation>
        <location evidence="2">Mitochondrion matrix</location>
    </subcellularLocation>
</comment>
<comment type="similarity">
    <text evidence="2">Belongs to the SDHAF2 family.</text>
</comment>
<evidence type="ECO:0000255" key="1"/>
<evidence type="ECO:0000255" key="2">
    <source>
        <dbReference type="HAMAP-Rule" id="MF_03057"/>
    </source>
</evidence>